<keyword id="KW-0007">Acetylation</keyword>
<keyword id="KW-0963">Cytoplasm</keyword>
<keyword id="KW-0342">GTP-binding</keyword>
<keyword id="KW-0396">Initiation factor</keyword>
<keyword id="KW-0547">Nucleotide-binding</keyword>
<keyword id="KW-0648">Protein biosynthesis</keyword>
<keyword id="KW-1185">Reference proteome</keyword>
<dbReference type="EMBL" id="FM180568">
    <property type="protein sequence ID" value="CAS10997.1"/>
    <property type="molecule type" value="Genomic_DNA"/>
</dbReference>
<dbReference type="RefSeq" id="WP_000133040.1">
    <property type="nucleotide sequence ID" value="NC_011601.1"/>
</dbReference>
<dbReference type="SMR" id="B7UJ63"/>
<dbReference type="KEGG" id="ecg:E2348C_3449"/>
<dbReference type="HOGENOM" id="CLU_006301_6_3_6"/>
<dbReference type="Proteomes" id="UP000008205">
    <property type="component" value="Chromosome"/>
</dbReference>
<dbReference type="GO" id="GO:0005829">
    <property type="term" value="C:cytosol"/>
    <property type="evidence" value="ECO:0007669"/>
    <property type="project" value="TreeGrafter"/>
</dbReference>
<dbReference type="GO" id="GO:0005525">
    <property type="term" value="F:GTP binding"/>
    <property type="evidence" value="ECO:0007669"/>
    <property type="project" value="UniProtKB-KW"/>
</dbReference>
<dbReference type="GO" id="GO:0003924">
    <property type="term" value="F:GTPase activity"/>
    <property type="evidence" value="ECO:0007669"/>
    <property type="project" value="UniProtKB-UniRule"/>
</dbReference>
<dbReference type="GO" id="GO:0097216">
    <property type="term" value="F:guanosine tetraphosphate binding"/>
    <property type="evidence" value="ECO:0007669"/>
    <property type="project" value="UniProtKB-ARBA"/>
</dbReference>
<dbReference type="GO" id="GO:0003743">
    <property type="term" value="F:translation initiation factor activity"/>
    <property type="evidence" value="ECO:0007669"/>
    <property type="project" value="UniProtKB-UniRule"/>
</dbReference>
<dbReference type="CDD" id="cd01887">
    <property type="entry name" value="IF2_eIF5B"/>
    <property type="match status" value="1"/>
</dbReference>
<dbReference type="CDD" id="cd03702">
    <property type="entry name" value="IF2_mtIF2_II"/>
    <property type="match status" value="1"/>
</dbReference>
<dbReference type="CDD" id="cd03692">
    <property type="entry name" value="mtIF2_IVc"/>
    <property type="match status" value="1"/>
</dbReference>
<dbReference type="FunFam" id="2.40.30.10:FF:000007">
    <property type="entry name" value="Translation initiation factor IF-2"/>
    <property type="match status" value="1"/>
</dbReference>
<dbReference type="FunFam" id="2.40.30.10:FF:000008">
    <property type="entry name" value="Translation initiation factor IF-2"/>
    <property type="match status" value="1"/>
</dbReference>
<dbReference type="FunFam" id="3.30.56.50:FF:000001">
    <property type="entry name" value="Translation initiation factor IF-2"/>
    <property type="match status" value="1"/>
</dbReference>
<dbReference type="FunFam" id="3.40.50.10050:FF:000001">
    <property type="entry name" value="Translation initiation factor IF-2"/>
    <property type="match status" value="1"/>
</dbReference>
<dbReference type="FunFam" id="3.40.50.300:FF:000019">
    <property type="entry name" value="Translation initiation factor IF-2"/>
    <property type="match status" value="1"/>
</dbReference>
<dbReference type="Gene3D" id="3.40.50.300">
    <property type="entry name" value="P-loop containing nucleotide triphosphate hydrolases"/>
    <property type="match status" value="1"/>
</dbReference>
<dbReference type="Gene3D" id="3.30.56.50">
    <property type="entry name" value="Putative DNA-binding domain, N-terminal subdomain of bacterial translation initiation factor IF2"/>
    <property type="match status" value="1"/>
</dbReference>
<dbReference type="Gene3D" id="2.40.30.10">
    <property type="entry name" value="Translation factors"/>
    <property type="match status" value="2"/>
</dbReference>
<dbReference type="Gene3D" id="3.40.50.10050">
    <property type="entry name" value="Translation initiation factor IF- 2, domain 3"/>
    <property type="match status" value="1"/>
</dbReference>
<dbReference type="HAMAP" id="MF_00100_B">
    <property type="entry name" value="IF_2_B"/>
    <property type="match status" value="1"/>
</dbReference>
<dbReference type="InterPro" id="IPR009061">
    <property type="entry name" value="DNA-bd_dom_put_sf"/>
</dbReference>
<dbReference type="InterPro" id="IPR053905">
    <property type="entry name" value="EF-G-like_DII"/>
</dbReference>
<dbReference type="InterPro" id="IPR004161">
    <property type="entry name" value="EFTu-like_2"/>
</dbReference>
<dbReference type="InterPro" id="IPR013575">
    <property type="entry name" value="IF2_assoc_dom_bac"/>
</dbReference>
<dbReference type="InterPro" id="IPR044145">
    <property type="entry name" value="IF2_II"/>
</dbReference>
<dbReference type="InterPro" id="IPR006847">
    <property type="entry name" value="IF2_N"/>
</dbReference>
<dbReference type="InterPro" id="IPR027417">
    <property type="entry name" value="P-loop_NTPase"/>
</dbReference>
<dbReference type="InterPro" id="IPR005225">
    <property type="entry name" value="Small_GTP-bd"/>
</dbReference>
<dbReference type="InterPro" id="IPR000795">
    <property type="entry name" value="T_Tr_GTP-bd_dom"/>
</dbReference>
<dbReference type="InterPro" id="IPR000178">
    <property type="entry name" value="TF_IF2_bacterial-like"/>
</dbReference>
<dbReference type="InterPro" id="IPR015760">
    <property type="entry name" value="TIF_IF2"/>
</dbReference>
<dbReference type="InterPro" id="IPR023115">
    <property type="entry name" value="TIF_IF2_dom3"/>
</dbReference>
<dbReference type="InterPro" id="IPR036925">
    <property type="entry name" value="TIF_IF2_dom3_sf"/>
</dbReference>
<dbReference type="InterPro" id="IPR009000">
    <property type="entry name" value="Transl_B-barrel_sf"/>
</dbReference>
<dbReference type="NCBIfam" id="TIGR00487">
    <property type="entry name" value="IF-2"/>
    <property type="match status" value="1"/>
</dbReference>
<dbReference type="NCBIfam" id="TIGR00231">
    <property type="entry name" value="small_GTP"/>
    <property type="match status" value="1"/>
</dbReference>
<dbReference type="PANTHER" id="PTHR43381:SF5">
    <property type="entry name" value="TR-TYPE G DOMAIN-CONTAINING PROTEIN"/>
    <property type="match status" value="1"/>
</dbReference>
<dbReference type="PANTHER" id="PTHR43381">
    <property type="entry name" value="TRANSLATION INITIATION FACTOR IF-2-RELATED"/>
    <property type="match status" value="1"/>
</dbReference>
<dbReference type="Pfam" id="PF22042">
    <property type="entry name" value="EF-G_D2"/>
    <property type="match status" value="1"/>
</dbReference>
<dbReference type="Pfam" id="PF00009">
    <property type="entry name" value="GTP_EFTU"/>
    <property type="match status" value="1"/>
</dbReference>
<dbReference type="Pfam" id="PF03144">
    <property type="entry name" value="GTP_EFTU_D2"/>
    <property type="match status" value="1"/>
</dbReference>
<dbReference type="Pfam" id="PF11987">
    <property type="entry name" value="IF-2"/>
    <property type="match status" value="1"/>
</dbReference>
<dbReference type="Pfam" id="PF08364">
    <property type="entry name" value="IF2_assoc"/>
    <property type="match status" value="1"/>
</dbReference>
<dbReference type="Pfam" id="PF04760">
    <property type="entry name" value="IF2_N"/>
    <property type="match status" value="2"/>
</dbReference>
<dbReference type="SUPFAM" id="SSF52156">
    <property type="entry name" value="Initiation factor IF2/eIF5b, domain 3"/>
    <property type="match status" value="1"/>
</dbReference>
<dbReference type="SUPFAM" id="SSF52540">
    <property type="entry name" value="P-loop containing nucleoside triphosphate hydrolases"/>
    <property type="match status" value="1"/>
</dbReference>
<dbReference type="SUPFAM" id="SSF46955">
    <property type="entry name" value="Putative DNA-binding domain"/>
    <property type="match status" value="1"/>
</dbReference>
<dbReference type="SUPFAM" id="SSF50447">
    <property type="entry name" value="Translation proteins"/>
    <property type="match status" value="2"/>
</dbReference>
<dbReference type="PROSITE" id="PS51722">
    <property type="entry name" value="G_TR_2"/>
    <property type="match status" value="1"/>
</dbReference>
<dbReference type="PROSITE" id="PS01176">
    <property type="entry name" value="IF2"/>
    <property type="match status" value="1"/>
</dbReference>
<reference key="1">
    <citation type="journal article" date="2009" name="J. Bacteriol.">
        <title>Complete genome sequence and comparative genome analysis of enteropathogenic Escherichia coli O127:H6 strain E2348/69.</title>
        <authorList>
            <person name="Iguchi A."/>
            <person name="Thomson N.R."/>
            <person name="Ogura Y."/>
            <person name="Saunders D."/>
            <person name="Ooka T."/>
            <person name="Henderson I.R."/>
            <person name="Harris D."/>
            <person name="Asadulghani M."/>
            <person name="Kurokawa K."/>
            <person name="Dean P."/>
            <person name="Kenny B."/>
            <person name="Quail M.A."/>
            <person name="Thurston S."/>
            <person name="Dougan G."/>
            <person name="Hayashi T."/>
            <person name="Parkhill J."/>
            <person name="Frankel G."/>
        </authorList>
    </citation>
    <scope>NUCLEOTIDE SEQUENCE [LARGE SCALE GENOMIC DNA]</scope>
    <source>
        <strain>E2348/69 / EPEC</strain>
    </source>
</reference>
<accession>B7UJ63</accession>
<proteinExistence type="inferred from homology"/>
<organism>
    <name type="scientific">Escherichia coli O127:H6 (strain E2348/69 / EPEC)</name>
    <dbReference type="NCBI Taxonomy" id="574521"/>
    <lineage>
        <taxon>Bacteria</taxon>
        <taxon>Pseudomonadati</taxon>
        <taxon>Pseudomonadota</taxon>
        <taxon>Gammaproteobacteria</taxon>
        <taxon>Enterobacterales</taxon>
        <taxon>Enterobacteriaceae</taxon>
        <taxon>Escherichia</taxon>
    </lineage>
</organism>
<sequence length="890" mass="97279">MTDVTIKTLAAERQTSVERLVQQFADAGIRKSADDSVSAQEKQTLIDHLNQKNSGPDKLTLQRKTRSTLNIPGTGGKSKSVQIEVRKKRTFVKRDPQEAERLAAEEQAQREAEEQARREAEESAKREAQQKAEREAAEQAKREAAEQAKREAAEKDKVSNQQDDMTKNAQAEKARREQEAAELKRKAEEEARRKLEEEARRVAEEARRMAEENKWTDNAEPTEDSSDYHVTTSQHARQAEDESDREVEGGRGRGRNAKAARPKKGNKHAESKADREEARAAVRGGKGGKRKGSSLQQGFQKPAQAVNRDVVIGETITVGELANKMAVKGSQVIKAMMKLGAMATINQVIDQETAQLVAEEMGHKVILRRENELEEAVMSDRDTGAAAEPRAPVVTIMGHVDHGKTSLLDYIRSTKVASGEAGGITQHIGAYHVETENGMITFLDTPGHAAFTSMRARGAQATDIVVLVVAADDGVMPQTIEAIQHAKAAGVPVVVAVNKIDKPEADPDRVKNELSQYGILPEEWGGESQFVHVSAKAGTGIDELLDAILLQAEVLELKAVRKGMASGAVIESFLDKGRGPVATVLVREGTLHKGDIVLCGFEYGRVRAMRNELGQEVLEAGPSIPVEILGLSGVPAAGDEVTVVRDEKKAREVALYRQGKFREVKLARQQKSKLENMFANMTEGEVHEVNIVLKADVQGSVEAISDSLLKLSTDEVKVKIIGSGVGGITETDATLAAASNAILVGFNVRADASARKVIEAESLDLRYYSVIYNLIDEVKAAMSGMLSPELKQQIIGLAEVRDVFKSPKFGAIAGCMVTEGVVKRHNPIRVLRDNVVIYEGELESLRRFKDDVNEVRNGMECGIGVKNYNDVRTGDVIEVFEIIEIQRTIA</sequence>
<feature type="chain" id="PRO_1000118760" description="Translation initiation factor IF-2">
    <location>
        <begin position="1"/>
        <end position="890"/>
    </location>
</feature>
<feature type="domain" description="tr-type G">
    <location>
        <begin position="389"/>
        <end position="558"/>
    </location>
</feature>
<feature type="region of interest" description="Disordered" evidence="3">
    <location>
        <begin position="45"/>
        <end position="304"/>
    </location>
</feature>
<feature type="region of interest" description="G1" evidence="1">
    <location>
        <begin position="398"/>
        <end position="405"/>
    </location>
</feature>
<feature type="region of interest" description="G2" evidence="1">
    <location>
        <begin position="423"/>
        <end position="427"/>
    </location>
</feature>
<feature type="region of interest" description="G3" evidence="1">
    <location>
        <begin position="444"/>
        <end position="447"/>
    </location>
</feature>
<feature type="region of interest" description="G4" evidence="1">
    <location>
        <begin position="498"/>
        <end position="501"/>
    </location>
</feature>
<feature type="region of interest" description="G5" evidence="1">
    <location>
        <begin position="534"/>
        <end position="536"/>
    </location>
</feature>
<feature type="compositionally biased region" description="Polar residues" evidence="3">
    <location>
        <begin position="67"/>
        <end position="81"/>
    </location>
</feature>
<feature type="compositionally biased region" description="Basic and acidic residues" evidence="3">
    <location>
        <begin position="92"/>
        <end position="217"/>
    </location>
</feature>
<feature type="compositionally biased region" description="Basic residues" evidence="3">
    <location>
        <begin position="252"/>
        <end position="266"/>
    </location>
</feature>
<feature type="compositionally biased region" description="Basic and acidic residues" evidence="3">
    <location>
        <begin position="267"/>
        <end position="280"/>
    </location>
</feature>
<feature type="binding site" evidence="2">
    <location>
        <begin position="398"/>
        <end position="405"/>
    </location>
    <ligand>
        <name>GTP</name>
        <dbReference type="ChEBI" id="CHEBI:37565"/>
    </ligand>
</feature>
<feature type="binding site" evidence="2">
    <location>
        <begin position="444"/>
        <end position="448"/>
    </location>
    <ligand>
        <name>GTP</name>
        <dbReference type="ChEBI" id="CHEBI:37565"/>
    </ligand>
</feature>
<feature type="binding site" evidence="2">
    <location>
        <begin position="498"/>
        <end position="501"/>
    </location>
    <ligand>
        <name>GTP</name>
        <dbReference type="ChEBI" id="CHEBI:37565"/>
    </ligand>
</feature>
<feature type="modified residue" description="N6-acetyllysine" evidence="1">
    <location>
        <position position="808"/>
    </location>
</feature>
<protein>
    <recommendedName>
        <fullName evidence="2">Translation initiation factor IF-2</fullName>
    </recommendedName>
</protein>
<evidence type="ECO:0000250" key="1"/>
<evidence type="ECO:0000255" key="2">
    <source>
        <dbReference type="HAMAP-Rule" id="MF_00100"/>
    </source>
</evidence>
<evidence type="ECO:0000256" key="3">
    <source>
        <dbReference type="SAM" id="MobiDB-lite"/>
    </source>
</evidence>
<comment type="function">
    <text evidence="2">One of the essential components for the initiation of protein synthesis. Protects formylmethionyl-tRNA from spontaneous hydrolysis and promotes its binding to the 30S ribosomal subunits. Also involved in the hydrolysis of GTP during the formation of the 70S ribosomal complex.</text>
</comment>
<comment type="subcellular location">
    <subcellularLocation>
        <location evidence="2">Cytoplasm</location>
    </subcellularLocation>
</comment>
<comment type="similarity">
    <text evidence="2">Belongs to the TRAFAC class translation factor GTPase superfamily. Classic translation factor GTPase family. IF-2 subfamily.</text>
</comment>
<gene>
    <name evidence="2" type="primary">infB</name>
    <name type="ordered locus">E2348C_3449</name>
</gene>
<name>IF2_ECO27</name>